<organism>
    <name type="scientific">Salmo salar</name>
    <name type="common">Atlantic salmon</name>
    <dbReference type="NCBI Taxonomy" id="8030"/>
    <lineage>
        <taxon>Eukaryota</taxon>
        <taxon>Metazoa</taxon>
        <taxon>Chordata</taxon>
        <taxon>Craniata</taxon>
        <taxon>Vertebrata</taxon>
        <taxon>Euteleostomi</taxon>
        <taxon>Actinopterygii</taxon>
        <taxon>Neopterygii</taxon>
        <taxon>Teleostei</taxon>
        <taxon>Protacanthopterygii</taxon>
        <taxon>Salmoniformes</taxon>
        <taxon>Salmonidae</taxon>
        <taxon>Salmoninae</taxon>
        <taxon>Salmo</taxon>
    </lineage>
</organism>
<accession>P35033</accession>
<dbReference type="EC" id="3.4.21.4"/>
<dbReference type="EMBL" id="X70074">
    <property type="protein sequence ID" value="CAA49679.1"/>
    <property type="molecule type" value="mRNA"/>
</dbReference>
<dbReference type="PIR" id="S66657">
    <property type="entry name" value="S31779"/>
</dbReference>
<dbReference type="PDB" id="1A0J">
    <property type="method" value="X-ray"/>
    <property type="resolution" value="1.70 A"/>
    <property type="chains" value="A/B/C/D=16-238"/>
</dbReference>
<dbReference type="PDBsum" id="1A0J"/>
<dbReference type="SMR" id="P35033"/>
<dbReference type="STRING" id="8030.ENSSSAP00000005761"/>
<dbReference type="MEROPS" id="S01.126"/>
<dbReference type="PaxDb" id="8030-ENSSSAP00000005761"/>
<dbReference type="SABIO-RK" id="P35033"/>
<dbReference type="EvolutionaryTrace" id="P35033"/>
<dbReference type="Proteomes" id="UP000087266">
    <property type="component" value="Unplaced"/>
</dbReference>
<dbReference type="GO" id="GO:0005615">
    <property type="term" value="C:extracellular space"/>
    <property type="evidence" value="ECO:0007669"/>
    <property type="project" value="TreeGrafter"/>
</dbReference>
<dbReference type="GO" id="GO:0046872">
    <property type="term" value="F:metal ion binding"/>
    <property type="evidence" value="ECO:0007669"/>
    <property type="project" value="UniProtKB-KW"/>
</dbReference>
<dbReference type="GO" id="GO:0004252">
    <property type="term" value="F:serine-type endopeptidase activity"/>
    <property type="evidence" value="ECO:0007669"/>
    <property type="project" value="UniProtKB-EC"/>
</dbReference>
<dbReference type="GO" id="GO:0007586">
    <property type="term" value="P:digestion"/>
    <property type="evidence" value="ECO:0007669"/>
    <property type="project" value="UniProtKB-KW"/>
</dbReference>
<dbReference type="GO" id="GO:0006508">
    <property type="term" value="P:proteolysis"/>
    <property type="evidence" value="ECO:0007669"/>
    <property type="project" value="UniProtKB-KW"/>
</dbReference>
<dbReference type="CDD" id="cd00190">
    <property type="entry name" value="Tryp_SPc"/>
    <property type="match status" value="1"/>
</dbReference>
<dbReference type="FunFam" id="2.40.10.10:FF:000005">
    <property type="entry name" value="Serine protease 37"/>
    <property type="match status" value="1"/>
</dbReference>
<dbReference type="Gene3D" id="2.40.10.10">
    <property type="entry name" value="Trypsin-like serine proteases"/>
    <property type="match status" value="2"/>
</dbReference>
<dbReference type="InterPro" id="IPR009003">
    <property type="entry name" value="Peptidase_S1_PA"/>
</dbReference>
<dbReference type="InterPro" id="IPR043504">
    <property type="entry name" value="Peptidase_S1_PA_chymotrypsin"/>
</dbReference>
<dbReference type="InterPro" id="IPR001314">
    <property type="entry name" value="Peptidase_S1A"/>
</dbReference>
<dbReference type="InterPro" id="IPR050127">
    <property type="entry name" value="Serine_Proteases_S1"/>
</dbReference>
<dbReference type="InterPro" id="IPR001254">
    <property type="entry name" value="Trypsin_dom"/>
</dbReference>
<dbReference type="InterPro" id="IPR018114">
    <property type="entry name" value="TRYPSIN_HIS"/>
</dbReference>
<dbReference type="InterPro" id="IPR033116">
    <property type="entry name" value="TRYPSIN_SER"/>
</dbReference>
<dbReference type="PANTHER" id="PTHR24264:SF15">
    <property type="entry name" value="RIKEN CDNA 2210010C04 GENE"/>
    <property type="match status" value="1"/>
</dbReference>
<dbReference type="PANTHER" id="PTHR24264">
    <property type="entry name" value="TRYPSIN-RELATED"/>
    <property type="match status" value="1"/>
</dbReference>
<dbReference type="Pfam" id="PF00089">
    <property type="entry name" value="Trypsin"/>
    <property type="match status" value="1"/>
</dbReference>
<dbReference type="PRINTS" id="PR00722">
    <property type="entry name" value="CHYMOTRYPSIN"/>
</dbReference>
<dbReference type="SMART" id="SM00020">
    <property type="entry name" value="Tryp_SPc"/>
    <property type="match status" value="1"/>
</dbReference>
<dbReference type="SUPFAM" id="SSF50494">
    <property type="entry name" value="Trypsin-like serine proteases"/>
    <property type="match status" value="1"/>
</dbReference>
<dbReference type="PROSITE" id="PS50240">
    <property type="entry name" value="TRYPSIN_DOM"/>
    <property type="match status" value="1"/>
</dbReference>
<dbReference type="PROSITE" id="PS00134">
    <property type="entry name" value="TRYPSIN_HIS"/>
    <property type="match status" value="1"/>
</dbReference>
<dbReference type="PROSITE" id="PS00135">
    <property type="entry name" value="TRYPSIN_SER"/>
    <property type="match status" value="1"/>
</dbReference>
<feature type="signal peptide" evidence="2">
    <location>
        <begin position="1" status="less than"/>
        <end position="7"/>
    </location>
</feature>
<feature type="propeptide" id="PRO_0000028229" description="Activation peptide">
    <location>
        <begin position="8"/>
        <end position="15"/>
    </location>
</feature>
<feature type="chain" id="PRO_0000028230" description="Trypsin-3">
    <location>
        <begin position="16"/>
        <end position="238"/>
    </location>
</feature>
<feature type="domain" description="Peptidase S1" evidence="3">
    <location>
        <begin position="16"/>
        <end position="236"/>
    </location>
</feature>
<feature type="active site" description="Charge relay system" evidence="1">
    <location>
        <position position="55"/>
    </location>
</feature>
<feature type="active site" description="Charge relay system" evidence="1">
    <location>
        <position position="99"/>
    </location>
</feature>
<feature type="active site" description="Charge relay system" evidence="1">
    <location>
        <position position="192"/>
    </location>
</feature>
<feature type="binding site" evidence="1">
    <location>
        <position position="67"/>
    </location>
    <ligand>
        <name>Ca(2+)</name>
        <dbReference type="ChEBI" id="CHEBI:29108"/>
    </ligand>
</feature>
<feature type="binding site" evidence="1">
    <location>
        <position position="69"/>
    </location>
    <ligand>
        <name>Ca(2+)</name>
        <dbReference type="ChEBI" id="CHEBI:29108"/>
    </ligand>
</feature>
<feature type="binding site">
    <location>
        <position position="72"/>
    </location>
    <ligand>
        <name>Ca(2+)</name>
        <dbReference type="ChEBI" id="CHEBI:29108"/>
    </ligand>
</feature>
<feature type="binding site" evidence="1">
    <location>
        <position position="77"/>
    </location>
    <ligand>
        <name>Ca(2+)</name>
        <dbReference type="ChEBI" id="CHEBI:29108"/>
    </ligand>
</feature>
<feature type="site" description="Required for specificity" evidence="1">
    <location>
        <position position="186"/>
    </location>
</feature>
<feature type="disulfide bond">
    <location>
        <begin position="22"/>
        <end position="152"/>
    </location>
</feature>
<feature type="disulfide bond">
    <location>
        <begin position="40"/>
        <end position="56"/>
    </location>
</feature>
<feature type="disulfide bond">
    <location>
        <begin position="124"/>
        <end position="225"/>
    </location>
</feature>
<feature type="disulfide bond">
    <location>
        <begin position="131"/>
        <end position="198"/>
    </location>
</feature>
<feature type="disulfide bond">
    <location>
        <begin position="163"/>
        <end position="177"/>
    </location>
</feature>
<feature type="disulfide bond">
    <location>
        <begin position="188"/>
        <end position="212"/>
    </location>
</feature>
<feature type="non-terminal residue">
    <location>
        <position position="1"/>
    </location>
</feature>
<feature type="turn" evidence="4">
    <location>
        <begin position="26"/>
        <end position="29"/>
    </location>
</feature>
<feature type="strand" evidence="4">
    <location>
        <begin position="30"/>
        <end position="35"/>
    </location>
</feature>
<feature type="strand" evidence="4">
    <location>
        <begin position="38"/>
        <end position="52"/>
    </location>
</feature>
<feature type="helix" evidence="4">
    <location>
        <begin position="54"/>
        <end position="56"/>
    </location>
</feature>
<feature type="strand" evidence="4">
    <location>
        <begin position="62"/>
        <end position="66"/>
    </location>
</feature>
<feature type="strand" evidence="4">
    <location>
        <begin position="68"/>
        <end position="72"/>
    </location>
</feature>
<feature type="strand" evidence="4">
    <location>
        <begin position="78"/>
        <end position="87"/>
    </location>
</feature>
<feature type="turn" evidence="4">
    <location>
        <begin position="93"/>
        <end position="96"/>
    </location>
</feature>
<feature type="strand" evidence="4">
    <location>
        <begin position="101"/>
        <end position="107"/>
    </location>
</feature>
<feature type="strand" evidence="4">
    <location>
        <begin position="130"/>
        <end position="137"/>
    </location>
</feature>
<feature type="strand" evidence="4">
    <location>
        <begin position="141"/>
        <end position="143"/>
    </location>
</feature>
<feature type="strand" evidence="4">
    <location>
        <begin position="151"/>
        <end position="157"/>
    </location>
</feature>
<feature type="helix" evidence="4">
    <location>
        <begin position="160"/>
        <end position="166"/>
    </location>
</feature>
<feature type="turn" evidence="4">
    <location>
        <begin position="168"/>
        <end position="170"/>
    </location>
</feature>
<feature type="strand" evidence="4">
    <location>
        <begin position="175"/>
        <end position="179"/>
    </location>
</feature>
<feature type="strand" evidence="4">
    <location>
        <begin position="195"/>
        <end position="198"/>
    </location>
</feature>
<feature type="strand" evidence="4">
    <location>
        <begin position="201"/>
        <end position="208"/>
    </location>
</feature>
<feature type="strand" evidence="4">
    <location>
        <begin position="210"/>
        <end position="213"/>
    </location>
</feature>
<feature type="strand" evidence="4">
    <location>
        <begin position="219"/>
        <end position="223"/>
    </location>
</feature>
<feature type="helix" evidence="4">
    <location>
        <begin position="224"/>
        <end position="227"/>
    </location>
</feature>
<feature type="helix" evidence="4">
    <location>
        <begin position="228"/>
        <end position="237"/>
    </location>
</feature>
<sequence>FAVAFAAPIDDEDDKIVGGYECRKNSASYQASLQSGYHFCGGSLISSTWVVSAAHCYKSRIQVRLGEHNIAVNEGTEQFIDSVKVIMHPSYNSRNLDNDIMLIKLSKPASLNSYVSTVALPSSCASSGTRCLVSGWGNLSGSSSNYPDTLRCLDLPILSSSSCNSAYPGQITSNMFCAGFMEGGKDSCQGDSGGPVVCNGQLQGVVSWGYGCAQRNKPGVYTKVCNYRSWISSTMSSN</sequence>
<comment type="catalytic activity">
    <reaction>
        <text>Preferential cleavage: Arg-|-Xaa, Lys-|-Xaa.</text>
        <dbReference type="EC" id="3.4.21.4"/>
    </reaction>
</comment>
<comment type="cofactor">
    <cofactor evidence="1">
        <name>Ca(2+)</name>
        <dbReference type="ChEBI" id="CHEBI:29108"/>
    </cofactor>
    <text evidence="1">Binds 1 Ca(2+) ion per subunit.</text>
</comment>
<comment type="subcellular location">
    <subcellularLocation>
        <location>Secreted</location>
        <location>Extracellular space</location>
    </subcellularLocation>
</comment>
<comment type="similarity">
    <text evidence="3">Belongs to the peptidase S1 family.</text>
</comment>
<protein>
    <recommendedName>
        <fullName>Trypsin-3</fullName>
        <ecNumber>3.4.21.4</ecNumber>
    </recommendedName>
    <alternativeName>
        <fullName>Trypsin III</fullName>
    </alternativeName>
</protein>
<proteinExistence type="evidence at protein level"/>
<name>TRY3_SALSA</name>
<evidence type="ECO:0000250" key="1"/>
<evidence type="ECO:0000255" key="2"/>
<evidence type="ECO:0000255" key="3">
    <source>
        <dbReference type="PROSITE-ProRule" id="PRU00274"/>
    </source>
</evidence>
<evidence type="ECO:0007829" key="4">
    <source>
        <dbReference type="PDB" id="1A0J"/>
    </source>
</evidence>
<reference key="1">
    <citation type="journal article" date="1995" name="Eur. J. Biochem.">
        <title>Molecular cloning and characterization of anionic and cationic variants of trypsin from Atlantic salmon.</title>
        <authorList>
            <person name="Male R."/>
            <person name="Lorens J.B."/>
            <person name="Smals A.O."/>
            <person name="Torrissen K.R."/>
        </authorList>
    </citation>
    <scope>NUCLEOTIDE SEQUENCE [MRNA]</scope>
    <source>
        <tissue>Pancreas</tissue>
    </source>
</reference>
<keyword id="KW-0002">3D-structure</keyword>
<keyword id="KW-0106">Calcium</keyword>
<keyword id="KW-0222">Digestion</keyword>
<keyword id="KW-1015">Disulfide bond</keyword>
<keyword id="KW-0378">Hydrolase</keyword>
<keyword id="KW-0479">Metal-binding</keyword>
<keyword id="KW-0645">Protease</keyword>
<keyword id="KW-1185">Reference proteome</keyword>
<keyword id="KW-0964">Secreted</keyword>
<keyword id="KW-0720">Serine protease</keyword>
<keyword id="KW-0732">Signal</keyword>
<keyword id="KW-0865">Zymogen</keyword>